<accession>B4T938</accession>
<evidence type="ECO:0000255" key="1">
    <source>
        <dbReference type="HAMAP-Rule" id="MF_01667"/>
    </source>
</evidence>
<name>GHRB_SALHS</name>
<gene>
    <name evidence="1" type="primary">ghrB</name>
    <name type="ordered locus">SeHA_C3969</name>
</gene>
<feature type="chain" id="PRO_1000187298" description="Glyoxylate/hydroxypyruvate reductase B">
    <location>
        <begin position="1"/>
        <end position="324"/>
    </location>
</feature>
<feature type="active site" evidence="1">
    <location>
        <position position="237"/>
    </location>
</feature>
<feature type="active site" evidence="1">
    <location>
        <position position="266"/>
    </location>
</feature>
<feature type="active site" description="Proton donor" evidence="1">
    <location>
        <position position="285"/>
    </location>
</feature>
<organism>
    <name type="scientific">Salmonella heidelberg (strain SL476)</name>
    <dbReference type="NCBI Taxonomy" id="454169"/>
    <lineage>
        <taxon>Bacteria</taxon>
        <taxon>Pseudomonadati</taxon>
        <taxon>Pseudomonadota</taxon>
        <taxon>Gammaproteobacteria</taxon>
        <taxon>Enterobacterales</taxon>
        <taxon>Enterobacteriaceae</taxon>
        <taxon>Salmonella</taxon>
    </lineage>
</organism>
<proteinExistence type="inferred from homology"/>
<sequence length="324" mass="35255">MKPSIILYKTLPDDLLHRLEAHFTVTQVPNLHPETVAQHAQAFASAQGLLGASETVNRALLEKMPALRAASTISVGYDNVEVDALTARKIVLMHTPAVLTETVADTVMALMLATARRVVDVAERVKAGEWTESIGPAWFGVDVHHKTLGIVGMGRIGMALAQRAHFGFTMPVLYHARRRHQEAEDRFNARYCDLDTLLQEADFVCVILPLTAETRHLFGATQFARMKSSAIFINAGRGPVVDENALIAALQNGEIYAAGLDVFEQEPLSVDSPLLNMSNVVAVPHIGSATHETRYNMMACAVDNLIDALQGKIEKNCVNPQAAG</sequence>
<dbReference type="EC" id="1.1.1.79" evidence="1"/>
<dbReference type="EC" id="1.1.1.81" evidence="1"/>
<dbReference type="EMBL" id="CP001120">
    <property type="protein sequence ID" value="ACF70372.1"/>
    <property type="molecule type" value="Genomic_DNA"/>
</dbReference>
<dbReference type="RefSeq" id="WP_000804674.1">
    <property type="nucleotide sequence ID" value="NC_011083.1"/>
</dbReference>
<dbReference type="SMR" id="B4T938"/>
<dbReference type="KEGG" id="seh:SeHA_C3969"/>
<dbReference type="HOGENOM" id="CLU_019796_1_2_6"/>
<dbReference type="Proteomes" id="UP000001866">
    <property type="component" value="Chromosome"/>
</dbReference>
<dbReference type="GO" id="GO:0005829">
    <property type="term" value="C:cytosol"/>
    <property type="evidence" value="ECO:0007669"/>
    <property type="project" value="TreeGrafter"/>
</dbReference>
<dbReference type="GO" id="GO:0005886">
    <property type="term" value="C:plasma membrane"/>
    <property type="evidence" value="ECO:0007669"/>
    <property type="project" value="UniProtKB-UniRule"/>
</dbReference>
<dbReference type="GO" id="GO:0030267">
    <property type="term" value="F:glyoxylate reductase (NADPH) activity"/>
    <property type="evidence" value="ECO:0007669"/>
    <property type="project" value="UniProtKB-UniRule"/>
</dbReference>
<dbReference type="GO" id="GO:0008465">
    <property type="term" value="F:hydroxypyruvate reductase (NADH) activity"/>
    <property type="evidence" value="ECO:0007669"/>
    <property type="project" value="RHEA"/>
</dbReference>
<dbReference type="GO" id="GO:0120509">
    <property type="term" value="F:hydroxypyruvate reductase (NADPH) activity"/>
    <property type="evidence" value="ECO:0007669"/>
    <property type="project" value="RHEA"/>
</dbReference>
<dbReference type="GO" id="GO:0051287">
    <property type="term" value="F:NAD binding"/>
    <property type="evidence" value="ECO:0007669"/>
    <property type="project" value="InterPro"/>
</dbReference>
<dbReference type="CDD" id="cd05301">
    <property type="entry name" value="GDH"/>
    <property type="match status" value="1"/>
</dbReference>
<dbReference type="FunFam" id="3.40.50.720:FF:000026">
    <property type="entry name" value="Glyoxylate/hydroxypyruvate reductase B"/>
    <property type="match status" value="1"/>
</dbReference>
<dbReference type="Gene3D" id="3.40.50.720">
    <property type="entry name" value="NAD(P)-binding Rossmann-like Domain"/>
    <property type="match status" value="2"/>
</dbReference>
<dbReference type="HAMAP" id="MF_01667">
    <property type="entry name" value="2_Hacid_dh_C_GhrB"/>
    <property type="match status" value="1"/>
</dbReference>
<dbReference type="InterPro" id="IPR050223">
    <property type="entry name" value="D-isomer_2-hydroxyacid_DH"/>
</dbReference>
<dbReference type="InterPro" id="IPR006139">
    <property type="entry name" value="D-isomer_2_OHA_DH_cat_dom"/>
</dbReference>
<dbReference type="InterPro" id="IPR029753">
    <property type="entry name" value="D-isomer_DH_CS"/>
</dbReference>
<dbReference type="InterPro" id="IPR006140">
    <property type="entry name" value="D-isomer_DH_NAD-bd"/>
</dbReference>
<dbReference type="InterPro" id="IPR023756">
    <property type="entry name" value="Glyo/OHPyrv_Rdtase_B"/>
</dbReference>
<dbReference type="InterPro" id="IPR036291">
    <property type="entry name" value="NAD(P)-bd_dom_sf"/>
</dbReference>
<dbReference type="NCBIfam" id="NF011938">
    <property type="entry name" value="PRK15409.1"/>
    <property type="match status" value="1"/>
</dbReference>
<dbReference type="PANTHER" id="PTHR10996">
    <property type="entry name" value="2-HYDROXYACID DEHYDROGENASE-RELATED"/>
    <property type="match status" value="1"/>
</dbReference>
<dbReference type="PANTHER" id="PTHR10996:SF283">
    <property type="entry name" value="GLYOXYLATE_HYDROXYPYRUVATE REDUCTASE B"/>
    <property type="match status" value="1"/>
</dbReference>
<dbReference type="Pfam" id="PF00389">
    <property type="entry name" value="2-Hacid_dh"/>
    <property type="match status" value="1"/>
</dbReference>
<dbReference type="Pfam" id="PF02826">
    <property type="entry name" value="2-Hacid_dh_C"/>
    <property type="match status" value="1"/>
</dbReference>
<dbReference type="SUPFAM" id="SSF52283">
    <property type="entry name" value="Formate/glycerate dehydrogenase catalytic domain-like"/>
    <property type="match status" value="1"/>
</dbReference>
<dbReference type="SUPFAM" id="SSF51735">
    <property type="entry name" value="NAD(P)-binding Rossmann-fold domains"/>
    <property type="match status" value="1"/>
</dbReference>
<dbReference type="PROSITE" id="PS00670">
    <property type="entry name" value="D_2_HYDROXYACID_DH_2"/>
    <property type="match status" value="1"/>
</dbReference>
<dbReference type="PROSITE" id="PS00671">
    <property type="entry name" value="D_2_HYDROXYACID_DH_3"/>
    <property type="match status" value="1"/>
</dbReference>
<reference key="1">
    <citation type="journal article" date="2011" name="J. Bacteriol.">
        <title>Comparative genomics of 28 Salmonella enterica isolates: evidence for CRISPR-mediated adaptive sublineage evolution.</title>
        <authorList>
            <person name="Fricke W.F."/>
            <person name="Mammel M.K."/>
            <person name="McDermott P.F."/>
            <person name="Tartera C."/>
            <person name="White D.G."/>
            <person name="Leclerc J.E."/>
            <person name="Ravel J."/>
            <person name="Cebula T.A."/>
        </authorList>
    </citation>
    <scope>NUCLEOTIDE SEQUENCE [LARGE SCALE GENOMIC DNA]</scope>
    <source>
        <strain>SL476</strain>
    </source>
</reference>
<keyword id="KW-0963">Cytoplasm</keyword>
<keyword id="KW-0520">NAD</keyword>
<keyword id="KW-0521">NADP</keyword>
<keyword id="KW-0560">Oxidoreductase</keyword>
<protein>
    <recommendedName>
        <fullName evidence="1">Glyoxylate/hydroxypyruvate reductase B</fullName>
        <ecNumber evidence="1">1.1.1.79</ecNumber>
        <ecNumber evidence="1">1.1.1.81</ecNumber>
    </recommendedName>
</protein>
<comment type="function">
    <text evidence="1">Catalyzes the NADPH-dependent reduction of glyoxylate and hydroxypyruvate into glycolate and glycerate, respectively.</text>
</comment>
<comment type="catalytic activity">
    <reaction evidence="1">
        <text>glycolate + NADP(+) = glyoxylate + NADPH + H(+)</text>
        <dbReference type="Rhea" id="RHEA:10992"/>
        <dbReference type="ChEBI" id="CHEBI:15378"/>
        <dbReference type="ChEBI" id="CHEBI:29805"/>
        <dbReference type="ChEBI" id="CHEBI:36655"/>
        <dbReference type="ChEBI" id="CHEBI:57783"/>
        <dbReference type="ChEBI" id="CHEBI:58349"/>
        <dbReference type="EC" id="1.1.1.79"/>
    </reaction>
</comment>
<comment type="catalytic activity">
    <reaction evidence="1">
        <text>(R)-glycerate + NAD(+) = 3-hydroxypyruvate + NADH + H(+)</text>
        <dbReference type="Rhea" id="RHEA:17905"/>
        <dbReference type="ChEBI" id="CHEBI:15378"/>
        <dbReference type="ChEBI" id="CHEBI:16659"/>
        <dbReference type="ChEBI" id="CHEBI:17180"/>
        <dbReference type="ChEBI" id="CHEBI:57540"/>
        <dbReference type="ChEBI" id="CHEBI:57945"/>
        <dbReference type="EC" id="1.1.1.81"/>
    </reaction>
</comment>
<comment type="catalytic activity">
    <reaction evidence="1">
        <text>(R)-glycerate + NADP(+) = 3-hydroxypyruvate + NADPH + H(+)</text>
        <dbReference type="Rhea" id="RHEA:18657"/>
        <dbReference type="ChEBI" id="CHEBI:15378"/>
        <dbReference type="ChEBI" id="CHEBI:16659"/>
        <dbReference type="ChEBI" id="CHEBI:17180"/>
        <dbReference type="ChEBI" id="CHEBI:57783"/>
        <dbReference type="ChEBI" id="CHEBI:58349"/>
        <dbReference type="EC" id="1.1.1.81"/>
    </reaction>
</comment>
<comment type="subunit">
    <text evidence="1">Homodimer.</text>
</comment>
<comment type="subcellular location">
    <subcellularLocation>
        <location evidence="1">Cytoplasm</location>
    </subcellularLocation>
</comment>
<comment type="similarity">
    <text evidence="1">Belongs to the D-isomer specific 2-hydroxyacid dehydrogenase family. GhrB subfamily.</text>
</comment>